<gene>
    <name type="primary">AMT1-4</name>
    <name type="ordered locus">At4g28700</name>
    <name type="ORF">F16A16.190</name>
</gene>
<dbReference type="EMBL" id="AL035353">
    <property type="protein sequence ID" value="CAA22982.1"/>
    <property type="molecule type" value="Genomic_DNA"/>
</dbReference>
<dbReference type="EMBL" id="AL161573">
    <property type="protein sequence ID" value="CAB81458.1"/>
    <property type="molecule type" value="Genomic_DNA"/>
</dbReference>
<dbReference type="EMBL" id="CP002687">
    <property type="protein sequence ID" value="AEE85527.1"/>
    <property type="molecule type" value="Genomic_DNA"/>
</dbReference>
<dbReference type="EMBL" id="DQ056659">
    <property type="protein sequence ID" value="AAY78806.1"/>
    <property type="molecule type" value="mRNA"/>
</dbReference>
<dbReference type="PIR" id="T04529">
    <property type="entry name" value="T04529"/>
</dbReference>
<dbReference type="SMR" id="Q9SVT8"/>
<dbReference type="BioGRID" id="14275">
    <property type="interactions" value="8"/>
</dbReference>
<dbReference type="FunCoup" id="Q9SVT8">
    <property type="interactions" value="13"/>
</dbReference>
<dbReference type="IntAct" id="Q9SVT8">
    <property type="interactions" value="7"/>
</dbReference>
<dbReference type="STRING" id="3702.Q9SVT8"/>
<dbReference type="TCDB" id="1.A.11.2.6">
    <property type="family name" value="the ammonium transporter channel (amt) family"/>
</dbReference>
<dbReference type="PaxDb" id="3702-AT4G28700.1"/>
<dbReference type="ProteomicsDB" id="244467"/>
<dbReference type="EnsemblPlants" id="AT4G28700.1">
    <property type="protein sequence ID" value="AT4G28700.1"/>
    <property type="gene ID" value="AT4G28700"/>
</dbReference>
<dbReference type="GeneID" id="828988"/>
<dbReference type="Gramene" id="AT4G28700.1">
    <property type="protein sequence ID" value="AT4G28700.1"/>
    <property type="gene ID" value="AT4G28700"/>
</dbReference>
<dbReference type="KEGG" id="ath:AT4G28700"/>
<dbReference type="Araport" id="AT4G28700"/>
<dbReference type="TAIR" id="AT4G28700">
    <property type="gene designation" value="AMT1"/>
</dbReference>
<dbReference type="eggNOG" id="KOG0682">
    <property type="taxonomic scope" value="Eukaryota"/>
</dbReference>
<dbReference type="HOGENOM" id="CLU_000445_33_1_1"/>
<dbReference type="InParanoid" id="Q9SVT8"/>
<dbReference type="OMA" id="HFFGMSD"/>
<dbReference type="PhylomeDB" id="Q9SVT8"/>
<dbReference type="SABIO-RK" id="Q9SVT8"/>
<dbReference type="PRO" id="PR:Q9SVT8"/>
<dbReference type="Proteomes" id="UP000006548">
    <property type="component" value="Chromosome 4"/>
</dbReference>
<dbReference type="ExpressionAtlas" id="Q9SVT8">
    <property type="expression patterns" value="baseline and differential"/>
</dbReference>
<dbReference type="GO" id="GO:0005886">
    <property type="term" value="C:plasma membrane"/>
    <property type="evidence" value="ECO:0000314"/>
    <property type="project" value="TAIR"/>
</dbReference>
<dbReference type="GO" id="GO:0009506">
    <property type="term" value="C:plasmodesma"/>
    <property type="evidence" value="ECO:0007005"/>
    <property type="project" value="TAIR"/>
</dbReference>
<dbReference type="GO" id="GO:0008519">
    <property type="term" value="F:ammonium channel activity"/>
    <property type="evidence" value="ECO:0000314"/>
    <property type="project" value="TAIR"/>
</dbReference>
<dbReference type="GO" id="GO:0072488">
    <property type="term" value="P:ammonium transmembrane transport"/>
    <property type="evidence" value="ECO:0000314"/>
    <property type="project" value="TAIR"/>
</dbReference>
<dbReference type="FunFam" id="1.10.3430.10:FF:000006">
    <property type="entry name" value="Ammonium transporter"/>
    <property type="match status" value="1"/>
</dbReference>
<dbReference type="Gene3D" id="1.10.3430.10">
    <property type="entry name" value="Ammonium transporter AmtB like domains"/>
    <property type="match status" value="1"/>
</dbReference>
<dbReference type="InterPro" id="IPR029020">
    <property type="entry name" value="Ammonium/urea_transptr"/>
</dbReference>
<dbReference type="InterPro" id="IPR001905">
    <property type="entry name" value="Ammonium_transpt"/>
</dbReference>
<dbReference type="InterPro" id="IPR018047">
    <property type="entry name" value="Ammonium_transpt_CS"/>
</dbReference>
<dbReference type="InterPro" id="IPR024041">
    <property type="entry name" value="NH4_transpt_AmtB-like_dom"/>
</dbReference>
<dbReference type="NCBIfam" id="TIGR00836">
    <property type="entry name" value="amt"/>
    <property type="match status" value="1"/>
</dbReference>
<dbReference type="PANTHER" id="PTHR11730">
    <property type="entry name" value="AMMONIUM TRANSPORTER"/>
    <property type="match status" value="1"/>
</dbReference>
<dbReference type="PANTHER" id="PTHR11730:SF101">
    <property type="entry name" value="AMMONIUM TRANSPORTER 1 MEMBER 4"/>
    <property type="match status" value="1"/>
</dbReference>
<dbReference type="Pfam" id="PF00909">
    <property type="entry name" value="Ammonium_transp"/>
    <property type="match status" value="1"/>
</dbReference>
<dbReference type="SUPFAM" id="SSF111352">
    <property type="entry name" value="Ammonium transporter"/>
    <property type="match status" value="1"/>
</dbReference>
<dbReference type="PROSITE" id="PS01219">
    <property type="entry name" value="AMMONIUM_TRANSP"/>
    <property type="match status" value="1"/>
</dbReference>
<protein>
    <recommendedName>
        <fullName>Ammonium transporter 1 member 4</fullName>
        <shortName>AtAMT1;4</shortName>
    </recommendedName>
</protein>
<sequence length="504" mass="53658">MASALSCSASDLIPLLSGGANATAAAAAAEYICGRFDTVAGKFTDAAYAIDNTYLLFSAYLVFAMQLGFAMLCAGSVRAKNTMNIMLTNVIDAAAGGLFYYLFGFAFAFGSPSNGFIGKHFFGMYDFPQPTFDYPYFLYQWTFAIAAAGITSGSIAERTQFVAYLIYSSFLTGLVYPIVSHWFWSSDGWASPARSENLLFQSGVIDFAGSGVVHMVGGIAGLWGALIEGPRIGRFGVGGKPVTLRGHSATLVVLGTFLLWFGWYGFNPGSFATIFKAYGETPGSSFYGQWSAVGRTAVTTTLAGCTAALTTLFGKRLIDGYWNVTDVCNGLLGGFAAITSGCSVVEPWAALVCGFVAAWVLMGCNRLAEKLQFDDPLEAAQLHGGCGAWGIIFTGLFAEKRYIAEIFGGDPNRPFGLLMGGGGRLLAAHVVQILVITGWVSVTMGTLFFILHKLKLLRIPAEDEIAGVDPTSHGGLAYMYTEDEIRNGIMVRRVGGDNDPNVGV</sequence>
<feature type="chain" id="PRO_0000139746" description="Ammonium transporter 1 member 4">
    <location>
        <begin position="1"/>
        <end position="504"/>
    </location>
</feature>
<feature type="transmembrane region" description="Helical" evidence="2">
    <location>
        <begin position="12"/>
        <end position="32"/>
    </location>
</feature>
<feature type="transmembrane region" description="Helical" evidence="2">
    <location>
        <begin position="55"/>
        <end position="75"/>
    </location>
</feature>
<feature type="transmembrane region" description="Helical" evidence="2">
    <location>
        <begin position="90"/>
        <end position="110"/>
    </location>
</feature>
<feature type="transmembrane region" description="Helical" evidence="2">
    <location>
        <begin position="136"/>
        <end position="156"/>
    </location>
</feature>
<feature type="transmembrane region" description="Helical" evidence="2">
    <location>
        <begin position="161"/>
        <end position="181"/>
    </location>
</feature>
<feature type="transmembrane region" description="Helical" evidence="2">
    <location>
        <begin position="207"/>
        <end position="227"/>
    </location>
</feature>
<feature type="transmembrane region" description="Helical" evidence="2">
    <location>
        <begin position="251"/>
        <end position="271"/>
    </location>
</feature>
<feature type="transmembrane region" description="Helical" evidence="2">
    <location>
        <begin position="292"/>
        <end position="314"/>
    </location>
</feature>
<feature type="transmembrane region" description="Helical" evidence="2">
    <location>
        <begin position="318"/>
        <end position="338"/>
    </location>
</feature>
<feature type="transmembrane region" description="Helical" evidence="2">
    <location>
        <begin position="344"/>
        <end position="364"/>
    </location>
</feature>
<feature type="transmembrane region" description="Helical" evidence="2">
    <location>
        <begin position="377"/>
        <end position="397"/>
    </location>
</feature>
<feature type="transmembrane region" description="Helical" evidence="2">
    <location>
        <begin position="430"/>
        <end position="450"/>
    </location>
</feature>
<feature type="modified residue" description="Phosphothreonine" evidence="1">
    <location>
        <position position="471"/>
    </location>
</feature>
<organism>
    <name type="scientific">Arabidopsis thaliana</name>
    <name type="common">Mouse-ear cress</name>
    <dbReference type="NCBI Taxonomy" id="3702"/>
    <lineage>
        <taxon>Eukaryota</taxon>
        <taxon>Viridiplantae</taxon>
        <taxon>Streptophyta</taxon>
        <taxon>Embryophyta</taxon>
        <taxon>Tracheophyta</taxon>
        <taxon>Spermatophyta</taxon>
        <taxon>Magnoliopsida</taxon>
        <taxon>eudicotyledons</taxon>
        <taxon>Gunneridae</taxon>
        <taxon>Pentapetalae</taxon>
        <taxon>rosids</taxon>
        <taxon>malvids</taxon>
        <taxon>Brassicales</taxon>
        <taxon>Brassicaceae</taxon>
        <taxon>Camelineae</taxon>
        <taxon>Arabidopsis</taxon>
    </lineage>
</organism>
<keyword id="KW-0924">Ammonia transport</keyword>
<keyword id="KW-1003">Cell membrane</keyword>
<keyword id="KW-0472">Membrane</keyword>
<keyword id="KW-0597">Phosphoprotein</keyword>
<keyword id="KW-1185">Reference proteome</keyword>
<keyword id="KW-0812">Transmembrane</keyword>
<keyword id="KW-1133">Transmembrane helix</keyword>
<keyword id="KW-0813">Transport</keyword>
<reference key="1">
    <citation type="journal article" date="1999" name="Nature">
        <title>Sequence and analysis of chromosome 4 of the plant Arabidopsis thaliana.</title>
        <authorList>
            <person name="Mayer K.F.X."/>
            <person name="Schueller C."/>
            <person name="Wambutt R."/>
            <person name="Murphy G."/>
            <person name="Volckaert G."/>
            <person name="Pohl T."/>
            <person name="Duesterhoeft A."/>
            <person name="Stiekema W."/>
            <person name="Entian K.-D."/>
            <person name="Terryn N."/>
            <person name="Harris B."/>
            <person name="Ansorge W."/>
            <person name="Brandt P."/>
            <person name="Grivell L.A."/>
            <person name="Rieger M."/>
            <person name="Weichselgartner M."/>
            <person name="de Simone V."/>
            <person name="Obermaier B."/>
            <person name="Mache R."/>
            <person name="Mueller M."/>
            <person name="Kreis M."/>
            <person name="Delseny M."/>
            <person name="Puigdomenech P."/>
            <person name="Watson M."/>
            <person name="Schmidtheini T."/>
            <person name="Reichert B."/>
            <person name="Portetelle D."/>
            <person name="Perez-Alonso M."/>
            <person name="Boutry M."/>
            <person name="Bancroft I."/>
            <person name="Vos P."/>
            <person name="Hoheisel J."/>
            <person name="Zimmermann W."/>
            <person name="Wedler H."/>
            <person name="Ridley P."/>
            <person name="Langham S.-A."/>
            <person name="McCullagh B."/>
            <person name="Bilham L."/>
            <person name="Robben J."/>
            <person name="van der Schueren J."/>
            <person name="Grymonprez B."/>
            <person name="Chuang Y.-J."/>
            <person name="Vandenbussche F."/>
            <person name="Braeken M."/>
            <person name="Weltjens I."/>
            <person name="Voet M."/>
            <person name="Bastiaens I."/>
            <person name="Aert R."/>
            <person name="Defoor E."/>
            <person name="Weitzenegger T."/>
            <person name="Bothe G."/>
            <person name="Ramsperger U."/>
            <person name="Hilbert H."/>
            <person name="Braun M."/>
            <person name="Holzer E."/>
            <person name="Brandt A."/>
            <person name="Peters S."/>
            <person name="van Staveren M."/>
            <person name="Dirkse W."/>
            <person name="Mooijman P."/>
            <person name="Klein Lankhorst R."/>
            <person name="Rose M."/>
            <person name="Hauf J."/>
            <person name="Koetter P."/>
            <person name="Berneiser S."/>
            <person name="Hempel S."/>
            <person name="Feldpausch M."/>
            <person name="Lamberth S."/>
            <person name="Van den Daele H."/>
            <person name="De Keyser A."/>
            <person name="Buysshaert C."/>
            <person name="Gielen J."/>
            <person name="Villarroel R."/>
            <person name="De Clercq R."/>
            <person name="van Montagu M."/>
            <person name="Rogers J."/>
            <person name="Cronin A."/>
            <person name="Quail M.A."/>
            <person name="Bray-Allen S."/>
            <person name="Clark L."/>
            <person name="Doggett J."/>
            <person name="Hall S."/>
            <person name="Kay M."/>
            <person name="Lennard N."/>
            <person name="McLay K."/>
            <person name="Mayes R."/>
            <person name="Pettett A."/>
            <person name="Rajandream M.A."/>
            <person name="Lyne M."/>
            <person name="Benes V."/>
            <person name="Rechmann S."/>
            <person name="Borkova D."/>
            <person name="Bloecker H."/>
            <person name="Scharfe M."/>
            <person name="Grimm M."/>
            <person name="Loehnert T.-H."/>
            <person name="Dose S."/>
            <person name="de Haan M."/>
            <person name="Maarse A.C."/>
            <person name="Schaefer M."/>
            <person name="Mueller-Auer S."/>
            <person name="Gabel C."/>
            <person name="Fuchs M."/>
            <person name="Fartmann B."/>
            <person name="Granderath K."/>
            <person name="Dauner D."/>
            <person name="Herzl A."/>
            <person name="Neumann S."/>
            <person name="Argiriou A."/>
            <person name="Vitale D."/>
            <person name="Liguori R."/>
            <person name="Piravandi E."/>
            <person name="Massenet O."/>
            <person name="Quigley F."/>
            <person name="Clabauld G."/>
            <person name="Muendlein A."/>
            <person name="Felber R."/>
            <person name="Schnabl S."/>
            <person name="Hiller R."/>
            <person name="Schmidt W."/>
            <person name="Lecharny A."/>
            <person name="Aubourg S."/>
            <person name="Chefdor F."/>
            <person name="Cooke R."/>
            <person name="Berger C."/>
            <person name="Monfort A."/>
            <person name="Casacuberta E."/>
            <person name="Gibbons T."/>
            <person name="Weber N."/>
            <person name="Vandenbol M."/>
            <person name="Bargues M."/>
            <person name="Terol J."/>
            <person name="Torres A."/>
            <person name="Perez-Perez A."/>
            <person name="Purnelle B."/>
            <person name="Bent E."/>
            <person name="Johnson S."/>
            <person name="Tacon D."/>
            <person name="Jesse T."/>
            <person name="Heijnen L."/>
            <person name="Schwarz S."/>
            <person name="Scholler P."/>
            <person name="Heber S."/>
            <person name="Francs P."/>
            <person name="Bielke C."/>
            <person name="Frishman D."/>
            <person name="Haase D."/>
            <person name="Lemcke K."/>
            <person name="Mewes H.-W."/>
            <person name="Stocker S."/>
            <person name="Zaccaria P."/>
            <person name="Bevan M."/>
            <person name="Wilson R.K."/>
            <person name="de la Bastide M."/>
            <person name="Habermann K."/>
            <person name="Parnell L."/>
            <person name="Dedhia N."/>
            <person name="Gnoj L."/>
            <person name="Schutz K."/>
            <person name="Huang E."/>
            <person name="Spiegel L."/>
            <person name="Sekhon M."/>
            <person name="Murray J."/>
            <person name="Sheet P."/>
            <person name="Cordes M."/>
            <person name="Abu-Threideh J."/>
            <person name="Stoneking T."/>
            <person name="Kalicki J."/>
            <person name="Graves T."/>
            <person name="Harmon G."/>
            <person name="Edwards J."/>
            <person name="Latreille P."/>
            <person name="Courtney L."/>
            <person name="Cloud J."/>
            <person name="Abbott A."/>
            <person name="Scott K."/>
            <person name="Johnson D."/>
            <person name="Minx P."/>
            <person name="Bentley D."/>
            <person name="Fulton B."/>
            <person name="Miller N."/>
            <person name="Greco T."/>
            <person name="Kemp K."/>
            <person name="Kramer J."/>
            <person name="Fulton L."/>
            <person name="Mardis E."/>
            <person name="Dante M."/>
            <person name="Pepin K."/>
            <person name="Hillier L.W."/>
            <person name="Nelson J."/>
            <person name="Spieth J."/>
            <person name="Ryan E."/>
            <person name="Andrews S."/>
            <person name="Geisel C."/>
            <person name="Layman D."/>
            <person name="Du H."/>
            <person name="Ali J."/>
            <person name="Berghoff A."/>
            <person name="Jones K."/>
            <person name="Drone K."/>
            <person name="Cotton M."/>
            <person name="Joshu C."/>
            <person name="Antonoiu B."/>
            <person name="Zidanic M."/>
            <person name="Strong C."/>
            <person name="Sun H."/>
            <person name="Lamar B."/>
            <person name="Yordan C."/>
            <person name="Ma P."/>
            <person name="Zhong J."/>
            <person name="Preston R."/>
            <person name="Vil D."/>
            <person name="Shekher M."/>
            <person name="Matero A."/>
            <person name="Shah R."/>
            <person name="Swaby I.K."/>
            <person name="O'Shaughnessy A."/>
            <person name="Rodriguez M."/>
            <person name="Hoffman J."/>
            <person name="Till S."/>
            <person name="Granat S."/>
            <person name="Shohdy N."/>
            <person name="Hasegawa A."/>
            <person name="Hameed A."/>
            <person name="Lodhi M."/>
            <person name="Johnson A."/>
            <person name="Chen E."/>
            <person name="Marra M.A."/>
            <person name="Martienssen R."/>
            <person name="McCombie W.R."/>
        </authorList>
    </citation>
    <scope>NUCLEOTIDE SEQUENCE [LARGE SCALE GENOMIC DNA]</scope>
    <source>
        <strain>cv. Columbia</strain>
    </source>
</reference>
<reference key="2">
    <citation type="journal article" date="2017" name="Plant J.">
        <title>Araport11: a complete reannotation of the Arabidopsis thaliana reference genome.</title>
        <authorList>
            <person name="Cheng C.Y."/>
            <person name="Krishnakumar V."/>
            <person name="Chan A.P."/>
            <person name="Thibaud-Nissen F."/>
            <person name="Schobel S."/>
            <person name="Town C.D."/>
        </authorList>
    </citation>
    <scope>GENOME REANNOTATION</scope>
    <source>
        <strain>cv. Columbia</strain>
    </source>
</reference>
<reference key="3">
    <citation type="submission" date="2005-05" db="EMBL/GenBank/DDBJ databases">
        <authorList>
            <person name="Underwood B.A."/>
            <person name="Xiao Y.-L."/>
            <person name="Moskal W.A. Jr."/>
            <person name="Monaghan E.L."/>
            <person name="Wang W."/>
            <person name="Redman J.C."/>
            <person name="Wu H.C."/>
            <person name="Utterback T."/>
            <person name="Town C.D."/>
        </authorList>
    </citation>
    <scope>NUCLEOTIDE SEQUENCE [LARGE SCALE MRNA]</scope>
    <source>
        <strain>cv. Columbia</strain>
    </source>
</reference>
<reference key="4">
    <citation type="journal article" date="2009" name="Plant Cell Physiol.">
        <title>AtAMT1;4, a pollen-specific high-affinity ammonium transporter of the plasma membrane in Arabidopsis.</title>
        <authorList>
            <person name="Yuan L."/>
            <person name="Graff L."/>
            <person name="Loque D."/>
            <person name="Kojima S."/>
            <person name="Tsuchiya Y.N."/>
            <person name="Takahashi H."/>
            <person name="von Wiren N."/>
        </authorList>
    </citation>
    <scope>FUNCTION</scope>
    <scope>BIOPHYSICOCHEMICAL PROPERTIES</scope>
    <scope>SUBCELLULAR LOCATION</scope>
    <scope>TISSUE SPECIFICITY</scope>
</reference>
<name>AMT14_ARATH</name>
<proteinExistence type="evidence at protein level"/>
<comment type="function">
    <text evidence="3">High affinity ammonium transporter in the plasma membrane.</text>
</comment>
<comment type="biophysicochemical properties">
    <kinetics>
        <KM evidence="3">17 uM for ammonium chloride</KM>
    </kinetics>
</comment>
<comment type="subcellular location">
    <subcellularLocation>
        <location evidence="3">Cell membrane</location>
        <topology evidence="3">Multi-pass membrane protein</topology>
    </subcellularLocation>
</comment>
<comment type="tissue specificity">
    <text evidence="3">Specifically expressed in pollen grains and tubes.</text>
</comment>
<comment type="similarity">
    <text evidence="4">Belongs to the ammonia transporter channel (TC 1.A.11.2) family.</text>
</comment>
<accession>Q9SVT8</accession>
<accession>Q4PSH7</accession>
<evidence type="ECO:0000250" key="1">
    <source>
        <dbReference type="UniProtKB" id="P54144"/>
    </source>
</evidence>
<evidence type="ECO:0000255" key="2"/>
<evidence type="ECO:0000269" key="3">
    <source>
    </source>
</evidence>
<evidence type="ECO:0000305" key="4"/>